<feature type="chain" id="PRO_0000163034" description="NADPH-dependent 7-cyano-7-deazaguanine reductase">
    <location>
        <begin position="1"/>
        <end position="279"/>
    </location>
</feature>
<feature type="active site" description="Thioimide intermediate" evidence="1">
    <location>
        <position position="187"/>
    </location>
</feature>
<feature type="active site" description="Proton donor" evidence="1">
    <location>
        <position position="194"/>
    </location>
</feature>
<feature type="binding site" evidence="1">
    <location>
        <begin position="86"/>
        <end position="88"/>
    </location>
    <ligand>
        <name>substrate</name>
    </ligand>
</feature>
<feature type="binding site" evidence="1">
    <location>
        <begin position="88"/>
        <end position="89"/>
    </location>
    <ligand>
        <name>NADPH</name>
        <dbReference type="ChEBI" id="CHEBI:57783"/>
    </ligand>
</feature>
<feature type="binding site" evidence="1">
    <location>
        <begin position="226"/>
        <end position="227"/>
    </location>
    <ligand>
        <name>substrate</name>
    </ligand>
</feature>
<feature type="binding site" evidence="1">
    <location>
        <begin position="255"/>
        <end position="256"/>
    </location>
    <ligand>
        <name>NADPH</name>
        <dbReference type="ChEBI" id="CHEBI:57783"/>
    </ligand>
</feature>
<evidence type="ECO:0000255" key="1">
    <source>
        <dbReference type="HAMAP-Rule" id="MF_00817"/>
    </source>
</evidence>
<name>QUEF_HAEDU</name>
<comment type="function">
    <text evidence="1">Catalyzes the NADPH-dependent reduction of 7-cyano-7-deazaguanine (preQ0) to 7-aminomethyl-7-deazaguanine (preQ1).</text>
</comment>
<comment type="catalytic activity">
    <reaction evidence="1">
        <text>7-aminomethyl-7-carbaguanine + 2 NADP(+) = 7-cyano-7-deazaguanine + 2 NADPH + 3 H(+)</text>
        <dbReference type="Rhea" id="RHEA:13409"/>
        <dbReference type="ChEBI" id="CHEBI:15378"/>
        <dbReference type="ChEBI" id="CHEBI:45075"/>
        <dbReference type="ChEBI" id="CHEBI:57783"/>
        <dbReference type="ChEBI" id="CHEBI:58349"/>
        <dbReference type="ChEBI" id="CHEBI:58703"/>
        <dbReference type="EC" id="1.7.1.13"/>
    </reaction>
</comment>
<comment type="pathway">
    <text evidence="1">tRNA modification; tRNA-queuosine biosynthesis.</text>
</comment>
<comment type="subunit">
    <text evidence="1">Homodimer.</text>
</comment>
<comment type="subcellular location">
    <subcellularLocation>
        <location evidence="1">Cytoplasm</location>
    </subcellularLocation>
</comment>
<comment type="similarity">
    <text evidence="1">Belongs to the GTP cyclohydrolase I family. QueF type 2 subfamily.</text>
</comment>
<gene>
    <name evidence="1" type="primary">queF</name>
    <name type="ordered locus">HD_1665</name>
</gene>
<accession>Q7VL22</accession>
<reference key="1">
    <citation type="submission" date="2003-06" db="EMBL/GenBank/DDBJ databases">
        <title>The complete genome sequence of Haemophilus ducreyi.</title>
        <authorList>
            <person name="Munson R.S. Jr."/>
            <person name="Ray W.C."/>
            <person name="Mahairas G."/>
            <person name="Sabo P."/>
            <person name="Mungur R."/>
            <person name="Johnson L."/>
            <person name="Nguyen D."/>
            <person name="Wang J."/>
            <person name="Forst C."/>
            <person name="Hood L."/>
        </authorList>
    </citation>
    <scope>NUCLEOTIDE SEQUENCE [LARGE SCALE GENOMIC DNA]</scope>
    <source>
        <strain>35000HP / ATCC 700724</strain>
    </source>
</reference>
<keyword id="KW-0963">Cytoplasm</keyword>
<keyword id="KW-0521">NADP</keyword>
<keyword id="KW-0560">Oxidoreductase</keyword>
<keyword id="KW-0671">Queuosine biosynthesis</keyword>
<keyword id="KW-1185">Reference proteome</keyword>
<proteinExistence type="inferred from homology"/>
<organism>
    <name type="scientific">Haemophilus ducreyi (strain 35000HP / ATCC 700724)</name>
    <dbReference type="NCBI Taxonomy" id="233412"/>
    <lineage>
        <taxon>Bacteria</taxon>
        <taxon>Pseudomonadati</taxon>
        <taxon>Pseudomonadota</taxon>
        <taxon>Gammaproteobacteria</taxon>
        <taxon>Pasteurellales</taxon>
        <taxon>Pasteurellaceae</taxon>
        <taxon>Haemophilus</taxon>
    </lineage>
</organism>
<sequence>MSYTDTVLSSLKLGQKTEYTGEYDPTLLQAVPRKLNRDHLGITEQQPFNQGADVWTCYEVSWLNLNGLPQVAIAEVVIDANSENLIESKSFKLYLNSVNQTTFESLEQVEYIIESDLSRCACGLVWVKIHKLSEYKNEIIADFSGECIDEQDIEIDNYQYSAQYLEHSAEGEEVEETLVSHLLKSNCLITSQPDWGSVQIHYVGKKINREKLLRYLVSFREHNEFHEQCVERIFTDLMTFAKPEKLMVYARYTRRGGLEINPFRANFDAMPQHIRMARQ</sequence>
<dbReference type="EC" id="1.7.1.13" evidence="1"/>
<dbReference type="EMBL" id="AE017143">
    <property type="protein sequence ID" value="AAP96437.1"/>
    <property type="molecule type" value="Genomic_DNA"/>
</dbReference>
<dbReference type="RefSeq" id="WP_010945469.1">
    <property type="nucleotide sequence ID" value="NC_002940.2"/>
</dbReference>
<dbReference type="SMR" id="Q7VL22"/>
<dbReference type="STRING" id="233412.HD_1665"/>
<dbReference type="KEGG" id="hdu:HD_1665"/>
<dbReference type="eggNOG" id="COG0780">
    <property type="taxonomic scope" value="Bacteria"/>
</dbReference>
<dbReference type="eggNOG" id="COG2904">
    <property type="taxonomic scope" value="Bacteria"/>
</dbReference>
<dbReference type="HOGENOM" id="CLU_054738_0_0_6"/>
<dbReference type="OrthoDB" id="9789995at2"/>
<dbReference type="UniPathway" id="UPA00392"/>
<dbReference type="Proteomes" id="UP000001022">
    <property type="component" value="Chromosome"/>
</dbReference>
<dbReference type="GO" id="GO:0005737">
    <property type="term" value="C:cytoplasm"/>
    <property type="evidence" value="ECO:0007669"/>
    <property type="project" value="UniProtKB-SubCell"/>
</dbReference>
<dbReference type="GO" id="GO:0033739">
    <property type="term" value="F:preQ1 synthase activity"/>
    <property type="evidence" value="ECO:0007669"/>
    <property type="project" value="UniProtKB-UniRule"/>
</dbReference>
<dbReference type="GO" id="GO:0008616">
    <property type="term" value="P:queuosine biosynthetic process"/>
    <property type="evidence" value="ECO:0007669"/>
    <property type="project" value="UniProtKB-UniRule"/>
</dbReference>
<dbReference type="GO" id="GO:0006400">
    <property type="term" value="P:tRNA modification"/>
    <property type="evidence" value="ECO:0007669"/>
    <property type="project" value="UniProtKB-UniRule"/>
</dbReference>
<dbReference type="Gene3D" id="3.30.1130.10">
    <property type="match status" value="2"/>
</dbReference>
<dbReference type="HAMAP" id="MF_00817">
    <property type="entry name" value="QueF_type2"/>
    <property type="match status" value="1"/>
</dbReference>
<dbReference type="InterPro" id="IPR043133">
    <property type="entry name" value="GTP-CH-I_C/QueF"/>
</dbReference>
<dbReference type="InterPro" id="IPR050084">
    <property type="entry name" value="NADPH_dep_7-cyano-7-deazaG_red"/>
</dbReference>
<dbReference type="InterPro" id="IPR029500">
    <property type="entry name" value="QueF"/>
</dbReference>
<dbReference type="InterPro" id="IPR029139">
    <property type="entry name" value="QueF_N"/>
</dbReference>
<dbReference type="InterPro" id="IPR016428">
    <property type="entry name" value="QueF_type2"/>
</dbReference>
<dbReference type="NCBIfam" id="TIGR03138">
    <property type="entry name" value="QueF"/>
    <property type="match status" value="1"/>
</dbReference>
<dbReference type="PANTHER" id="PTHR34354">
    <property type="entry name" value="NADPH-DEPENDENT 7-CYANO-7-DEAZAGUANINE REDUCTASE"/>
    <property type="match status" value="1"/>
</dbReference>
<dbReference type="PANTHER" id="PTHR34354:SF1">
    <property type="entry name" value="NADPH-DEPENDENT 7-CYANO-7-DEAZAGUANINE REDUCTASE"/>
    <property type="match status" value="1"/>
</dbReference>
<dbReference type="Pfam" id="PF14489">
    <property type="entry name" value="QueF"/>
    <property type="match status" value="1"/>
</dbReference>
<dbReference type="Pfam" id="PF14819">
    <property type="entry name" value="QueF_N"/>
    <property type="match status" value="1"/>
</dbReference>
<dbReference type="PIRSF" id="PIRSF004750">
    <property type="entry name" value="Nitrile_oxidored_YqcD_prd"/>
    <property type="match status" value="1"/>
</dbReference>
<dbReference type="SUPFAM" id="SSF55620">
    <property type="entry name" value="Tetrahydrobiopterin biosynthesis enzymes-like"/>
    <property type="match status" value="1"/>
</dbReference>
<protein>
    <recommendedName>
        <fullName evidence="1">NADPH-dependent 7-cyano-7-deazaguanine reductase</fullName>
        <ecNumber evidence="1">1.7.1.13</ecNumber>
    </recommendedName>
    <alternativeName>
        <fullName evidence="1">7-cyano-7-carbaguanine reductase</fullName>
    </alternativeName>
    <alternativeName>
        <fullName evidence="1">NADPH-dependent nitrile oxidoreductase</fullName>
    </alternativeName>
    <alternativeName>
        <fullName evidence="1">PreQ(0) reductase</fullName>
    </alternativeName>
</protein>